<keyword id="KW-0025">Alternative splicing</keyword>
<keyword id="KW-1048">Host nucleus</keyword>
<keyword id="KW-0472">Membrane</keyword>
<keyword id="KW-0694">RNA-binding</keyword>
<keyword id="KW-0468">Viral matrix protein</keyword>
<keyword id="KW-0946">Virion</keyword>
<comment type="function">
    <text evidence="1">Plays critical roles in virus replication, from virus entry and uncoating to assembly and budding of the virus particle. M1 binding to ribonucleocapsids (RNPs) in nucleus seems to inhibit viral transcription. Interaction of viral NEP with M1-RNP is thought to promote nuclear export of the complex, which is targeted to the virion assembly site at the apical plasma membrane in polarized epithelial cells. Interactions with NA and HA may bring M1, a non-raft-associated protein, into lipid rafts. Forms a continuous shell on the inner side of the lipid bilayer in virion, where it binds the RNP. During virus entry into cell, the M2 ion channel acidifies the internal virion core, inducing M1 dissociation from the RNP. M1-free RNPs are transported to the nucleus, where viral transcription and replication can take place.</text>
</comment>
<comment type="function">
    <text evidence="1">Determines the virion's shape: spherical or filamentous. Clinical isolates of influenza are characterized by the presence of significant proportion of filamentous virions, whereas after multiple passage on eggs or cell culture, virions have only spherical morphology. Filamentous virions are thought to be important to infect neighboring cells, and spherical virions more suited to spread through aerosol between hosts organisms.</text>
</comment>
<comment type="subunit">
    <text evidence="1">Homodimer and homomultimer. Interacts with NEP. Binds ribonucleocapsid by both interacting with genomic RNA and NP protein. May interact with HA and NA. Cannot bind NP without genomic RNA.</text>
</comment>
<comment type="subcellular location">
    <subcellularLocation>
        <location evidence="1">Virion membrane</location>
        <topology evidence="1">Peripheral membrane protein</topology>
        <orientation evidence="1">Cytoplasmic side</orientation>
    </subcellularLocation>
    <subcellularLocation>
        <location evidence="1">Host nucleus</location>
    </subcellularLocation>
</comment>
<comment type="alternative products">
    <event type="alternative splicing"/>
    <isoform>
        <id>Q76V05-1</id>
        <name>M1</name>
        <sequence type="displayed"/>
    </isoform>
    <isoform>
        <id>Q67210-1</id>
        <name>M2</name>
        <sequence type="external"/>
    </isoform>
    <text>Only the first 9 residues are shared by the 2 isoforms.</text>
</comment>
<comment type="miscellaneous">
    <text evidence="1">Most abundant protein in virion. When expressed alone can form virus-like particles in transfected cells.</text>
</comment>
<comment type="similarity">
    <text evidence="1">Belongs to the influenza viruses Matrix protein M1 family.</text>
</comment>
<sequence>MSLLTEVETYVLSIVPSGPLKAEIAQRLEDVFAGKNTDLEALMEWLKTRPILSPLTKGILGFVFTLTVPSERGLQRRRFVQNALNGNGDPNNMDRAVKLYRKLKREITFHGAKEVALSYSTGALASCMGLIYNRMGTVTTEVAFGLVCATCEQIADSQHRSHRQMVTTTNPLIRHENRMVLASTTAKAMEQMAGSSEQAAEAMEVASQARQMVQAMRTIGTHPSSSAGLKDDLLENLQAYQKRMGVQMQRFK</sequence>
<gene>
    <name evidence="1" type="primary">M</name>
</gene>
<accession>Q76V05</accession>
<accession>Q20NP1</accession>
<proteinExistence type="inferred from homology"/>
<evidence type="ECO:0000255" key="1">
    <source>
        <dbReference type="HAMAP-Rule" id="MF_04068"/>
    </source>
</evidence>
<feature type="chain" id="PRO_0000326313" description="Matrix protein 1">
    <location>
        <begin position="1"/>
        <end position="252"/>
    </location>
</feature>
<feature type="region of interest" description="Membrane-binding" evidence="1">
    <location>
        <begin position="1"/>
        <end position="164"/>
    </location>
</feature>
<feature type="region of interest" description="RNP-binding" evidence="1">
    <location>
        <begin position="165"/>
        <end position="252"/>
    </location>
</feature>
<feature type="short sequence motif" description="Nuclear localization signal" evidence="1">
    <location>
        <begin position="101"/>
        <end position="105"/>
    </location>
</feature>
<organismHost>
    <name type="scientific">Aves</name>
    <dbReference type="NCBI Taxonomy" id="8782"/>
</organismHost>
<reference key="1">
    <citation type="journal article" date="1991" name="J. Virol.">
        <title>Evolutionary analysis of the influenza A virus M gene with comparison of the M1 and M2 proteins.</title>
        <authorList>
            <person name="Ito T."/>
            <person name="Gorman O.T."/>
            <person name="Kawaoka Y."/>
            <person name="Bean W.J."/>
            <person name="Webster R.G."/>
        </authorList>
    </citation>
    <scope>NUCLEOTIDE SEQUENCE [GENOMIC RNA]</scope>
</reference>
<reference key="2">
    <citation type="journal article" date="2006" name="Science">
        <title>Large-scale sequence analysis of avian influenza isolates.</title>
        <authorList>
            <person name="Obenauer J.C."/>
            <person name="Denson J."/>
            <person name="Mehta P.K."/>
            <person name="Su X."/>
            <person name="Mukatira S."/>
            <person name="Finkelstein D.B."/>
            <person name="Xu X."/>
            <person name="Wang J."/>
            <person name="Ma J."/>
            <person name="Fan Y."/>
            <person name="Rakestraw K.M."/>
            <person name="Webster R.G."/>
            <person name="Hoffmann E."/>
            <person name="Krauss S."/>
            <person name="Zheng J."/>
            <person name="Zhang Z."/>
            <person name="Naeve C.W."/>
        </authorList>
    </citation>
    <scope>NUCLEOTIDE SEQUENCE [GENOMIC RNA]</scope>
</reference>
<dbReference type="EMBL" id="M63527">
    <property type="protein sequence ID" value="AAA43349.1"/>
    <property type="molecule type" value="Genomic_RNA"/>
</dbReference>
<dbReference type="EMBL" id="CY005907">
    <property type="protein sequence ID" value="ABB21820.1"/>
    <property type="molecule type" value="Genomic_RNA"/>
</dbReference>
<dbReference type="SMR" id="Q76V05"/>
<dbReference type="Proteomes" id="UP000008579">
    <property type="component" value="Genome"/>
</dbReference>
<dbReference type="GO" id="GO:0042025">
    <property type="term" value="C:host cell nucleus"/>
    <property type="evidence" value="ECO:0007669"/>
    <property type="project" value="UniProtKB-SubCell"/>
</dbReference>
<dbReference type="GO" id="GO:0016020">
    <property type="term" value="C:membrane"/>
    <property type="evidence" value="ECO:0007669"/>
    <property type="project" value="UniProtKB-KW"/>
</dbReference>
<dbReference type="GO" id="GO:0055036">
    <property type="term" value="C:virion membrane"/>
    <property type="evidence" value="ECO:0007669"/>
    <property type="project" value="UniProtKB-SubCell"/>
</dbReference>
<dbReference type="GO" id="GO:0003723">
    <property type="term" value="F:RNA binding"/>
    <property type="evidence" value="ECO:0007669"/>
    <property type="project" value="UniProtKB-UniRule"/>
</dbReference>
<dbReference type="GO" id="GO:0039660">
    <property type="term" value="F:structural constituent of virion"/>
    <property type="evidence" value="ECO:0007669"/>
    <property type="project" value="UniProtKB-UniRule"/>
</dbReference>
<dbReference type="GO" id="GO:0046761">
    <property type="term" value="P:viral budding from plasma membrane"/>
    <property type="evidence" value="ECO:0007669"/>
    <property type="project" value="UniProtKB-UniRule"/>
</dbReference>
<dbReference type="FunFam" id="1.10.10.180:FF:000001">
    <property type="entry name" value="Matrix protein 1"/>
    <property type="match status" value="1"/>
</dbReference>
<dbReference type="FunFam" id="1.20.91.10:FF:000001">
    <property type="entry name" value="Matrix protein 1"/>
    <property type="match status" value="1"/>
</dbReference>
<dbReference type="Gene3D" id="1.10.10.180">
    <property type="match status" value="1"/>
</dbReference>
<dbReference type="Gene3D" id="1.20.91.10">
    <property type="match status" value="1"/>
</dbReference>
<dbReference type="HAMAP" id="MF_04068">
    <property type="entry name" value="INFV_M1"/>
    <property type="match status" value="1"/>
</dbReference>
<dbReference type="InterPro" id="IPR036039">
    <property type="entry name" value="Flu_matrix_M1"/>
</dbReference>
<dbReference type="InterPro" id="IPR013188">
    <property type="entry name" value="Flu_matrix_M1_C"/>
</dbReference>
<dbReference type="InterPro" id="IPR001561">
    <property type="entry name" value="Flu_matrix_M1_N"/>
</dbReference>
<dbReference type="InterPro" id="IPR015423">
    <property type="entry name" value="Flu_matrix_M1_N_sub1"/>
</dbReference>
<dbReference type="InterPro" id="IPR015799">
    <property type="entry name" value="Flu_matrix_M1_N_sub2"/>
</dbReference>
<dbReference type="InterPro" id="IPR037533">
    <property type="entry name" value="INFV_M1"/>
</dbReference>
<dbReference type="Pfam" id="PF00598">
    <property type="entry name" value="Flu_M1"/>
    <property type="match status" value="1"/>
</dbReference>
<dbReference type="Pfam" id="PF08289">
    <property type="entry name" value="Flu_M1_C"/>
    <property type="match status" value="1"/>
</dbReference>
<dbReference type="SMART" id="SM00759">
    <property type="entry name" value="Flu_M1_C"/>
    <property type="match status" value="1"/>
</dbReference>
<dbReference type="SUPFAM" id="SSF48145">
    <property type="entry name" value="Influenza virus matrix protein M1"/>
    <property type="match status" value="1"/>
</dbReference>
<organism>
    <name type="scientific">Influenza A virus (strain A/Turkey/Minnesota/833/1980 H4N2)</name>
    <dbReference type="NCBI Taxonomy" id="383603"/>
    <lineage>
        <taxon>Viruses</taxon>
        <taxon>Riboviria</taxon>
        <taxon>Orthornavirae</taxon>
        <taxon>Negarnaviricota</taxon>
        <taxon>Polyploviricotina</taxon>
        <taxon>Insthoviricetes</taxon>
        <taxon>Articulavirales</taxon>
        <taxon>Orthomyxoviridae</taxon>
        <taxon>Alphainfluenzavirus</taxon>
        <taxon>Alphainfluenzavirus influenzae</taxon>
        <taxon>Influenza A virus</taxon>
    </lineage>
</organism>
<name>M1_I80A8</name>
<protein>
    <recommendedName>
        <fullName evidence="1">Matrix protein 1</fullName>
        <shortName evidence="1">M1</shortName>
    </recommendedName>
</protein>